<name>DADA_NEIMF</name>
<reference key="1">
    <citation type="journal article" date="2007" name="PLoS Genet.">
        <title>Meningococcal genetic variation mechanisms viewed through comparative analysis of serogroup C strain FAM18.</title>
        <authorList>
            <person name="Bentley S.D."/>
            <person name="Vernikos G.S."/>
            <person name="Snyder L.A.S."/>
            <person name="Churcher C."/>
            <person name="Arrowsmith C."/>
            <person name="Chillingworth T."/>
            <person name="Cronin A."/>
            <person name="Davis P.H."/>
            <person name="Holroyd N.E."/>
            <person name="Jagels K."/>
            <person name="Maddison M."/>
            <person name="Moule S."/>
            <person name="Rabbinowitsch E."/>
            <person name="Sharp S."/>
            <person name="Unwin L."/>
            <person name="Whitehead S."/>
            <person name="Quail M.A."/>
            <person name="Achtman M."/>
            <person name="Barrell B.G."/>
            <person name="Saunders N.J."/>
            <person name="Parkhill J."/>
        </authorList>
    </citation>
    <scope>NUCLEOTIDE SEQUENCE [LARGE SCALE GENOMIC DNA]</scope>
    <source>
        <strain>ATCC 700532 / DSM 15464 / FAM18</strain>
    </source>
</reference>
<feature type="chain" id="PRO_1000066101" description="D-amino acid dehydrogenase">
    <location>
        <begin position="1"/>
        <end position="418"/>
    </location>
</feature>
<feature type="binding site" evidence="1">
    <location>
        <begin position="3"/>
        <end position="17"/>
    </location>
    <ligand>
        <name>FAD</name>
        <dbReference type="ChEBI" id="CHEBI:57692"/>
    </ligand>
</feature>
<organism>
    <name type="scientific">Neisseria meningitidis serogroup C / serotype 2a (strain ATCC 700532 / DSM 15464 / FAM18)</name>
    <dbReference type="NCBI Taxonomy" id="272831"/>
    <lineage>
        <taxon>Bacteria</taxon>
        <taxon>Pseudomonadati</taxon>
        <taxon>Pseudomonadota</taxon>
        <taxon>Betaproteobacteria</taxon>
        <taxon>Neisseriales</taxon>
        <taxon>Neisseriaceae</taxon>
        <taxon>Neisseria</taxon>
    </lineage>
</organism>
<protein>
    <recommendedName>
        <fullName evidence="1">D-amino acid dehydrogenase</fullName>
        <ecNumber evidence="1">1.4.99.-</ecNumber>
    </recommendedName>
</protein>
<sequence>MKVLVLGAGVAGVSSAWYLAEAGHEVTVIDRAKGVAMETSFANAGQLSYGYTTPWAAPGIPTKALKWLFKSHPPLLFRPDGSLYQIEWLWRMLQNCTAAHYQTNKERMVRISEYSREMFRRFEAQTGMNFEERKKGTLQIFRQTKEVEAAEQDIAVLERYGVPYRRLKPEECAEFEPALARVTAKIAGGLHLPADATGDCHLFTENLYKLCQEKGVQFHFNQTISRIDHNGLRIKAVETETGRFEADAVVCALGCFSRTVLAQLDLDLPIYPVKGYSLTLPVTNSDGAPVSTVLDESYKVAITRFDNRIRVGGMAELSGYEIKLPEKRRETLALVVNDLFPEGGDLSQALFWSGLRPMTPDSTPLIGRTRFENLFLNTGHGTLGWTMSLGSAKLTADIVSGKDTEIRSDDLSLSRYQA</sequence>
<evidence type="ECO:0000255" key="1">
    <source>
        <dbReference type="HAMAP-Rule" id="MF_01202"/>
    </source>
</evidence>
<proteinExistence type="inferred from homology"/>
<gene>
    <name evidence="1" type="primary">dadA</name>
    <name type="ordered locus">NMC0166</name>
</gene>
<dbReference type="EC" id="1.4.99.-" evidence="1"/>
<dbReference type="EMBL" id="AM421808">
    <property type="protein sequence ID" value="CAM09485.1"/>
    <property type="molecule type" value="Genomic_DNA"/>
</dbReference>
<dbReference type="RefSeq" id="WP_002220181.1">
    <property type="nucleotide sequence ID" value="NC_008767.1"/>
</dbReference>
<dbReference type="SMR" id="A1KRK7"/>
<dbReference type="KEGG" id="nmc:NMC0166"/>
<dbReference type="HOGENOM" id="CLU_007884_9_2_4"/>
<dbReference type="UniPathway" id="UPA00043">
    <property type="reaction ID" value="UER00498"/>
</dbReference>
<dbReference type="Proteomes" id="UP000002286">
    <property type="component" value="Chromosome"/>
</dbReference>
<dbReference type="GO" id="GO:0005737">
    <property type="term" value="C:cytoplasm"/>
    <property type="evidence" value="ECO:0007669"/>
    <property type="project" value="TreeGrafter"/>
</dbReference>
<dbReference type="GO" id="GO:0005886">
    <property type="term" value="C:plasma membrane"/>
    <property type="evidence" value="ECO:0007669"/>
    <property type="project" value="TreeGrafter"/>
</dbReference>
<dbReference type="GO" id="GO:0008718">
    <property type="term" value="F:D-amino-acid dehydrogenase activity"/>
    <property type="evidence" value="ECO:0007669"/>
    <property type="project" value="UniProtKB-UniRule"/>
</dbReference>
<dbReference type="GO" id="GO:0055130">
    <property type="term" value="P:D-alanine catabolic process"/>
    <property type="evidence" value="ECO:0007669"/>
    <property type="project" value="UniProtKB-UniPathway"/>
</dbReference>
<dbReference type="FunFam" id="3.50.50.60:FF:000020">
    <property type="entry name" value="D-amino acid dehydrogenase"/>
    <property type="match status" value="1"/>
</dbReference>
<dbReference type="Gene3D" id="3.30.9.10">
    <property type="entry name" value="D-Amino Acid Oxidase, subunit A, domain 2"/>
    <property type="match status" value="1"/>
</dbReference>
<dbReference type="Gene3D" id="3.50.50.60">
    <property type="entry name" value="FAD/NAD(P)-binding domain"/>
    <property type="match status" value="2"/>
</dbReference>
<dbReference type="HAMAP" id="MF_01202">
    <property type="entry name" value="DadA"/>
    <property type="match status" value="1"/>
</dbReference>
<dbReference type="InterPro" id="IPR023080">
    <property type="entry name" value="DadA"/>
</dbReference>
<dbReference type="InterPro" id="IPR006076">
    <property type="entry name" value="FAD-dep_OxRdtase"/>
</dbReference>
<dbReference type="InterPro" id="IPR036188">
    <property type="entry name" value="FAD/NAD-bd_sf"/>
</dbReference>
<dbReference type="NCBIfam" id="NF001933">
    <property type="entry name" value="PRK00711.1"/>
    <property type="match status" value="1"/>
</dbReference>
<dbReference type="PANTHER" id="PTHR13847:SF280">
    <property type="entry name" value="D-AMINO ACID DEHYDROGENASE"/>
    <property type="match status" value="1"/>
</dbReference>
<dbReference type="PANTHER" id="PTHR13847">
    <property type="entry name" value="SARCOSINE DEHYDROGENASE-RELATED"/>
    <property type="match status" value="1"/>
</dbReference>
<dbReference type="Pfam" id="PF01266">
    <property type="entry name" value="DAO"/>
    <property type="match status" value="1"/>
</dbReference>
<dbReference type="SUPFAM" id="SSF54373">
    <property type="entry name" value="FAD-linked reductases, C-terminal domain"/>
    <property type="match status" value="1"/>
</dbReference>
<dbReference type="SUPFAM" id="SSF51905">
    <property type="entry name" value="FAD/NAD(P)-binding domain"/>
    <property type="match status" value="1"/>
</dbReference>
<keyword id="KW-0274">FAD</keyword>
<keyword id="KW-0285">Flavoprotein</keyword>
<keyword id="KW-0560">Oxidoreductase</keyword>
<comment type="function">
    <text evidence="1">Oxidative deamination of D-amino acids.</text>
</comment>
<comment type="catalytic activity">
    <reaction evidence="1">
        <text>a D-alpha-amino acid + A + H2O = a 2-oxocarboxylate + AH2 + NH4(+)</text>
        <dbReference type="Rhea" id="RHEA:18125"/>
        <dbReference type="ChEBI" id="CHEBI:13193"/>
        <dbReference type="ChEBI" id="CHEBI:15377"/>
        <dbReference type="ChEBI" id="CHEBI:17499"/>
        <dbReference type="ChEBI" id="CHEBI:28938"/>
        <dbReference type="ChEBI" id="CHEBI:35179"/>
        <dbReference type="ChEBI" id="CHEBI:59871"/>
    </reaction>
</comment>
<comment type="cofactor">
    <cofactor evidence="1">
        <name>FAD</name>
        <dbReference type="ChEBI" id="CHEBI:57692"/>
    </cofactor>
</comment>
<comment type="pathway">
    <text>Amino-acid degradation; D-alanine degradation; NH(3) and pyruvate from D-alanine: step 1/1.</text>
</comment>
<comment type="similarity">
    <text evidence="1">Belongs to the DadA oxidoreductase family.</text>
</comment>
<accession>A1KRK7</accession>